<gene>
    <name evidence="1" type="primary">cbiT</name>
    <name type="ordered locus">MMP1221</name>
</gene>
<name>CBIT_METMP</name>
<accession>P61820</accession>
<comment type="function">
    <text evidence="1">Catalyzes the methylation of C-15 in cobalt-precorrin-6B followed by the decarboxylation of C-12 to form cobalt-precorrin-7.</text>
</comment>
<comment type="catalytic activity">
    <reaction evidence="1">
        <text>Co-precorrin-6B + S-adenosyl-L-methionine = Co-precorrin-7 + S-adenosyl-L-homocysteine + CO2</text>
        <dbReference type="Rhea" id="RHEA:36067"/>
        <dbReference type="ChEBI" id="CHEBI:16526"/>
        <dbReference type="ChEBI" id="CHEBI:57856"/>
        <dbReference type="ChEBI" id="CHEBI:59789"/>
        <dbReference type="ChEBI" id="CHEBI:70791"/>
        <dbReference type="ChEBI" id="CHEBI:72780"/>
        <dbReference type="EC" id="2.1.1.196"/>
    </reaction>
</comment>
<comment type="pathway">
    <text evidence="1">Cofactor biosynthesis; adenosylcobalamin biosynthesis; cob(II)yrinate a,c-diamide from sirohydrochlorin (anaerobic route): step 8/10.</text>
</comment>
<comment type="similarity">
    <text evidence="1">Belongs to the methyltransferase superfamily. Archaeal-type CbiT family.</text>
</comment>
<protein>
    <recommendedName>
        <fullName evidence="1">Probable cobalt-precorrin-6B C(15)-methyltransferase (decarboxylating)</fullName>
        <ecNumber evidence="1">2.1.1.196</ecNumber>
    </recommendedName>
</protein>
<keyword id="KW-0169">Cobalamin biosynthesis</keyword>
<keyword id="KW-0489">Methyltransferase</keyword>
<keyword id="KW-1185">Reference proteome</keyword>
<keyword id="KW-0949">S-adenosyl-L-methionine</keyword>
<keyword id="KW-0808">Transferase</keyword>
<reference key="1">
    <citation type="journal article" date="2004" name="J. Bacteriol.">
        <title>Complete genome sequence of the genetically tractable hydrogenotrophic methanogen Methanococcus maripaludis.</title>
        <authorList>
            <person name="Hendrickson E.L."/>
            <person name="Kaul R."/>
            <person name="Zhou Y."/>
            <person name="Bovee D."/>
            <person name="Chapman P."/>
            <person name="Chung J."/>
            <person name="Conway de Macario E."/>
            <person name="Dodsworth J.A."/>
            <person name="Gillett W."/>
            <person name="Graham D.E."/>
            <person name="Hackett M."/>
            <person name="Haydock A.K."/>
            <person name="Kang A."/>
            <person name="Land M.L."/>
            <person name="Levy R."/>
            <person name="Lie T.J."/>
            <person name="Major T.A."/>
            <person name="Moore B.C."/>
            <person name="Porat I."/>
            <person name="Palmeiri A."/>
            <person name="Rouse G."/>
            <person name="Saenphimmachak C."/>
            <person name="Soell D."/>
            <person name="Van Dien S."/>
            <person name="Wang T."/>
            <person name="Whitman W.B."/>
            <person name="Xia Q."/>
            <person name="Zhang Y."/>
            <person name="Larimer F.W."/>
            <person name="Olson M.V."/>
            <person name="Leigh J.A."/>
        </authorList>
    </citation>
    <scope>NUCLEOTIDE SEQUENCE [LARGE SCALE GENOMIC DNA]</scope>
    <source>
        <strain>DSM 14266 / JCM 13030 / NBRC 101832 / S2 / LL</strain>
    </source>
</reference>
<proteinExistence type="inferred from homology"/>
<organism>
    <name type="scientific">Methanococcus maripaludis (strain DSM 14266 / JCM 13030 / NBRC 101832 / S2 / LL)</name>
    <dbReference type="NCBI Taxonomy" id="267377"/>
    <lineage>
        <taxon>Archaea</taxon>
        <taxon>Methanobacteriati</taxon>
        <taxon>Methanobacteriota</taxon>
        <taxon>Methanomada group</taxon>
        <taxon>Methanococci</taxon>
        <taxon>Methanococcales</taxon>
        <taxon>Methanococcaceae</taxon>
        <taxon>Methanococcus</taxon>
    </lineage>
</organism>
<evidence type="ECO:0000255" key="1">
    <source>
        <dbReference type="HAMAP-Rule" id="MF_00786"/>
    </source>
</evidence>
<sequence length="181" mass="20166">MIQDSEFFRMEGVPITKEEIRAVSIGKLNLDPEDVVLDIGCGSGGMSVEISKRSKFVYSIDNSEDAKNTTLNNLKKFNVENCTVSLGNAEDLISKFDFNKVFIGGTQNIEQILEILKEKNIERIVVNTIVLENSVKIINKFEELGYNVDFVNVSVSYGKKINSGHIMLSKNPITIITATLK</sequence>
<feature type="chain" id="PRO_0000134940" description="Probable cobalt-precorrin-6B C(15)-methyltransferase (decarboxylating)">
    <location>
        <begin position="1"/>
        <end position="181"/>
    </location>
</feature>
<feature type="binding site" evidence="1">
    <location>
        <position position="16"/>
    </location>
    <ligand>
        <name>S-adenosyl-L-methionine</name>
        <dbReference type="ChEBI" id="CHEBI:59789"/>
    </ligand>
</feature>
<feature type="binding site" evidence="1">
    <location>
        <begin position="40"/>
        <end position="44"/>
    </location>
    <ligand>
        <name>S-adenosyl-L-methionine</name>
        <dbReference type="ChEBI" id="CHEBI:59789"/>
    </ligand>
</feature>
<feature type="binding site" evidence="1">
    <location>
        <position position="61"/>
    </location>
    <ligand>
        <name>S-adenosyl-L-methionine</name>
        <dbReference type="ChEBI" id="CHEBI:59789"/>
    </ligand>
</feature>
<feature type="binding site" evidence="1">
    <location>
        <position position="89"/>
    </location>
    <ligand>
        <name>S-adenosyl-L-methionine</name>
        <dbReference type="ChEBI" id="CHEBI:59789"/>
    </ligand>
</feature>
<dbReference type="EC" id="2.1.1.196" evidence="1"/>
<dbReference type="EMBL" id="BX950229">
    <property type="protein sequence ID" value="CAF30777.1"/>
    <property type="molecule type" value="Genomic_DNA"/>
</dbReference>
<dbReference type="RefSeq" id="WP_011171165.1">
    <property type="nucleotide sequence ID" value="NC_005791.1"/>
</dbReference>
<dbReference type="SMR" id="P61820"/>
<dbReference type="STRING" id="267377.MMP1221"/>
<dbReference type="EnsemblBacteria" id="CAF30777">
    <property type="protein sequence ID" value="CAF30777"/>
    <property type="gene ID" value="MMP1221"/>
</dbReference>
<dbReference type="GeneID" id="41279800"/>
<dbReference type="KEGG" id="mmp:MMP1221"/>
<dbReference type="PATRIC" id="fig|267377.15.peg.1254"/>
<dbReference type="eggNOG" id="arCOG00977">
    <property type="taxonomic scope" value="Archaea"/>
</dbReference>
<dbReference type="HOGENOM" id="CLU_094143_0_0_2"/>
<dbReference type="OrthoDB" id="6027at2157"/>
<dbReference type="UniPathway" id="UPA00148">
    <property type="reaction ID" value="UER00229"/>
</dbReference>
<dbReference type="Proteomes" id="UP000000590">
    <property type="component" value="Chromosome"/>
</dbReference>
<dbReference type="GO" id="GO:0043776">
    <property type="term" value="F:cobalt-precorrin-6B C5-methyltransferase activity"/>
    <property type="evidence" value="ECO:0007669"/>
    <property type="project" value="RHEA"/>
</dbReference>
<dbReference type="GO" id="GO:0008276">
    <property type="term" value="F:protein methyltransferase activity"/>
    <property type="evidence" value="ECO:0007669"/>
    <property type="project" value="InterPro"/>
</dbReference>
<dbReference type="GO" id="GO:0019251">
    <property type="term" value="P:anaerobic cobalamin biosynthetic process"/>
    <property type="evidence" value="ECO:0007669"/>
    <property type="project" value="UniProtKB-UniRule"/>
</dbReference>
<dbReference type="GO" id="GO:0032259">
    <property type="term" value="P:methylation"/>
    <property type="evidence" value="ECO:0007669"/>
    <property type="project" value="UniProtKB-KW"/>
</dbReference>
<dbReference type="CDD" id="cd02440">
    <property type="entry name" value="AdoMet_MTases"/>
    <property type="match status" value="1"/>
</dbReference>
<dbReference type="Gene3D" id="3.40.50.150">
    <property type="entry name" value="Vaccinia Virus protein VP39"/>
    <property type="match status" value="1"/>
</dbReference>
<dbReference type="HAMAP" id="MF_00786">
    <property type="entry name" value="CbiT"/>
    <property type="match status" value="1"/>
</dbReference>
<dbReference type="InterPro" id="IPR023475">
    <property type="entry name" value="CbiT"/>
</dbReference>
<dbReference type="InterPro" id="IPR014008">
    <property type="entry name" value="Cbl_synth_MTase_CbiT"/>
</dbReference>
<dbReference type="InterPro" id="IPR050714">
    <property type="entry name" value="Cobalamin_biosynth_MTase"/>
</dbReference>
<dbReference type="InterPro" id="IPR025714">
    <property type="entry name" value="Methyltranfer_dom"/>
</dbReference>
<dbReference type="InterPro" id="IPR029063">
    <property type="entry name" value="SAM-dependent_MTases_sf"/>
</dbReference>
<dbReference type="NCBIfam" id="TIGR02469">
    <property type="entry name" value="CbiT"/>
    <property type="match status" value="1"/>
</dbReference>
<dbReference type="PANTHER" id="PTHR43182">
    <property type="entry name" value="COBALT-PRECORRIN-6B C(15)-METHYLTRANSFERASE (DECARBOXYLATING)"/>
    <property type="match status" value="1"/>
</dbReference>
<dbReference type="PANTHER" id="PTHR43182:SF1">
    <property type="entry name" value="COBALT-PRECORRIN-7 C(5)-METHYLTRANSFERASE"/>
    <property type="match status" value="1"/>
</dbReference>
<dbReference type="Pfam" id="PF13847">
    <property type="entry name" value="Methyltransf_31"/>
    <property type="match status" value="1"/>
</dbReference>
<dbReference type="SUPFAM" id="SSF53335">
    <property type="entry name" value="S-adenosyl-L-methionine-dependent methyltransferases"/>
    <property type="match status" value="1"/>
</dbReference>